<protein>
    <recommendedName>
        <fullName>Histone H2B.1</fullName>
        <shortName>H2B-1</shortName>
    </recommendedName>
</protein>
<name>H2B1_TETTS</name>
<dbReference type="EMBL" id="X05543">
    <property type="protein sequence ID" value="CAA29059.1"/>
    <property type="molecule type" value="Genomic_DNA"/>
</dbReference>
<dbReference type="EMBL" id="GG662809">
    <property type="protein sequence ID" value="EAR89829.1"/>
    <property type="molecule type" value="Genomic_DNA"/>
</dbReference>
<dbReference type="PIR" id="A27097">
    <property type="entry name" value="A27097"/>
</dbReference>
<dbReference type="RefSeq" id="XP_001010074.1">
    <property type="nucleotide sequence ID" value="XM_001010074.3"/>
</dbReference>
<dbReference type="SMR" id="P08993"/>
<dbReference type="FunCoup" id="P08993">
    <property type="interactions" value="24"/>
</dbReference>
<dbReference type="STRING" id="312017.P08993"/>
<dbReference type="iPTMnet" id="P08993"/>
<dbReference type="EnsemblProtists" id="EAR89829">
    <property type="protein sequence ID" value="EAR89829"/>
    <property type="gene ID" value="TTHERM_00633360"/>
</dbReference>
<dbReference type="GeneID" id="7826226"/>
<dbReference type="KEGG" id="tet:TTHERM_00633360"/>
<dbReference type="eggNOG" id="KOG1744">
    <property type="taxonomic scope" value="Eukaryota"/>
</dbReference>
<dbReference type="HOGENOM" id="CLU_075666_1_3_1"/>
<dbReference type="InParanoid" id="P08993"/>
<dbReference type="OMA" id="FCPFAIR"/>
<dbReference type="OrthoDB" id="305527at2759"/>
<dbReference type="Proteomes" id="UP000009168">
    <property type="component" value="Unassembled WGS sequence"/>
</dbReference>
<dbReference type="GO" id="GO:0000786">
    <property type="term" value="C:nucleosome"/>
    <property type="evidence" value="ECO:0007669"/>
    <property type="project" value="UniProtKB-KW"/>
</dbReference>
<dbReference type="GO" id="GO:0005634">
    <property type="term" value="C:nucleus"/>
    <property type="evidence" value="ECO:0007669"/>
    <property type="project" value="UniProtKB-SubCell"/>
</dbReference>
<dbReference type="GO" id="GO:0003677">
    <property type="term" value="F:DNA binding"/>
    <property type="evidence" value="ECO:0007669"/>
    <property type="project" value="UniProtKB-KW"/>
</dbReference>
<dbReference type="GO" id="GO:0046982">
    <property type="term" value="F:protein heterodimerization activity"/>
    <property type="evidence" value="ECO:0007669"/>
    <property type="project" value="InterPro"/>
</dbReference>
<dbReference type="GO" id="GO:0030527">
    <property type="term" value="F:structural constituent of chromatin"/>
    <property type="evidence" value="ECO:0007669"/>
    <property type="project" value="InterPro"/>
</dbReference>
<dbReference type="CDD" id="cd22910">
    <property type="entry name" value="HFD_H2B"/>
    <property type="match status" value="1"/>
</dbReference>
<dbReference type="FunFam" id="1.10.20.10:FF:000016">
    <property type="entry name" value="Histone H2B"/>
    <property type="match status" value="1"/>
</dbReference>
<dbReference type="Gene3D" id="1.10.20.10">
    <property type="entry name" value="Histone, subunit A"/>
    <property type="match status" value="1"/>
</dbReference>
<dbReference type="InterPro" id="IPR009072">
    <property type="entry name" value="Histone-fold"/>
</dbReference>
<dbReference type="InterPro" id="IPR007125">
    <property type="entry name" value="Histone_H2A/H2B/H3"/>
</dbReference>
<dbReference type="InterPro" id="IPR000558">
    <property type="entry name" value="Histone_H2B"/>
</dbReference>
<dbReference type="InterPro" id="IPR055333">
    <property type="entry name" value="HISTONE_H2B_site"/>
</dbReference>
<dbReference type="PANTHER" id="PTHR23428">
    <property type="entry name" value="HISTONE H2B"/>
    <property type="match status" value="1"/>
</dbReference>
<dbReference type="Pfam" id="PF00125">
    <property type="entry name" value="Histone"/>
    <property type="match status" value="1"/>
</dbReference>
<dbReference type="PRINTS" id="PR00621">
    <property type="entry name" value="HISTONEH2B"/>
</dbReference>
<dbReference type="SMART" id="SM00427">
    <property type="entry name" value="H2B"/>
    <property type="match status" value="1"/>
</dbReference>
<dbReference type="SUPFAM" id="SSF47113">
    <property type="entry name" value="Histone-fold"/>
    <property type="match status" value="1"/>
</dbReference>
<dbReference type="PROSITE" id="PS00357">
    <property type="entry name" value="HISTONE_H2B"/>
    <property type="match status" value="1"/>
</dbReference>
<accession>P08993</accession>
<accession>Q22X17</accession>
<sequence length="122" mass="13589">MAPKKAPAAAAEKKVKKAPTTEKKNKKKRSETFAIYIFKVLKQVHPDVGISKKAMNIMNSFINDSFERIALESSKLVRFNKRRTLSSREVQTAVKLLLPGELARHAISEGTKAVTKFSSSTN</sequence>
<comment type="function">
    <text>Core component of nucleosome. Nucleosomes wrap and compact DNA into chromatin, limiting DNA accessibility to the cellular machineries which require DNA as a template. Histones thereby play a central role in transcription regulation, DNA repair, DNA replication and chromosomal stability. DNA accessibility is regulated via a complex set of post-translational modifications of histones, also called histone code, and nucleosome remodeling.</text>
</comment>
<comment type="subunit">
    <text>The nucleosome is a histone octamer containing two molecules each of H2A, H2B, H3 and H4 assembled in one H3-H4 heterotetramer and two H2A-H2B heterodimers. The octamer wraps approximately 147 bp of DNA.</text>
</comment>
<comment type="subcellular location">
    <subcellularLocation>
        <location>Nucleus</location>
    </subcellularLocation>
    <subcellularLocation>
        <location>Chromosome</location>
    </subcellularLocation>
    <text>Macronuclei.</text>
</comment>
<comment type="PTM">
    <text evidence="3 4">Acetylation occurs almost exclusively in the MAC.</text>
</comment>
<comment type="PTM">
    <text evidence="5">Monoubiquitination to form H2BK115ub1 gives a specific tag for epigenetic transcriptional activation and is also prerequisite for H3K4me and H3K79me formation.</text>
</comment>
<comment type="similarity">
    <text evidence="5">Belongs to the histone H2B family.</text>
</comment>
<comment type="caution">
    <text evidence="5">To ensure consistency between histone entries, we follow the 'Brno' nomenclature for histone modifications, with positions referring to those used in the literature for the 'closest' model organism. Due to slight variations in histone sequences between organisms and to the presence of initiator methionine in UniProtKB/Swiss-Prot sequences, the actual positions of modified amino acids in the sequence generally differ. In this entry the following conventions are used: H2BK4ac = acetylated Lys-5; H2BK41ac = acetylated Lys-42; H2BK115ub1 = monoubiquitinated Lys-116.</text>
</comment>
<proteinExistence type="evidence at protein level"/>
<feature type="initiator methionine" description="Removed" evidence="1">
    <location>
        <position position="1"/>
    </location>
</feature>
<feature type="chain" id="PRO_0000071905" description="Histone H2B.1">
    <location>
        <begin position="2"/>
        <end position="122"/>
    </location>
</feature>
<feature type="region of interest" description="Disordered" evidence="2">
    <location>
        <begin position="1"/>
        <end position="28"/>
    </location>
</feature>
<feature type="compositionally biased region" description="Low complexity" evidence="2">
    <location>
        <begin position="1"/>
        <end position="10"/>
    </location>
</feature>
<feature type="modified residue" description="N,N,N-trimethylalanine" evidence="3">
    <location>
        <position position="2"/>
    </location>
</feature>
<feature type="modified residue" description="N6-acetyllysine" evidence="3">
    <location>
        <position position="5"/>
    </location>
</feature>
<feature type="modified residue" description="N6-acetyllysine" evidence="3">
    <location>
        <position position="42"/>
    </location>
</feature>
<feature type="cross-link" description="Glycyl lysine isopeptide (Lys-Gly) (interchain with G-Cter in ubiquitin)" evidence="5">
    <location>
        <position position="116"/>
    </location>
</feature>
<keyword id="KW-0007">Acetylation</keyword>
<keyword id="KW-0158">Chromosome</keyword>
<keyword id="KW-0238">DNA-binding</keyword>
<keyword id="KW-1017">Isopeptide bond</keyword>
<keyword id="KW-0488">Methylation</keyword>
<keyword id="KW-0544">Nucleosome core</keyword>
<keyword id="KW-0539">Nucleus</keyword>
<keyword id="KW-1185">Reference proteome</keyword>
<keyword id="KW-0832">Ubl conjugation</keyword>
<gene>
    <name type="primary">HTB1</name>
    <name type="ORF">TTHERM_00633360</name>
</gene>
<reference key="1">
    <citation type="journal article" date="1987" name="Nucleic Acids Res.">
        <title>Characterization of two types of histone H2B genes from macronuclei of Tetrahymena thermophila.</title>
        <authorList>
            <person name="Nomoto M."/>
            <person name="Imai N."/>
            <person name="Saiga H."/>
            <person name="Matsui T."/>
            <person name="Mita T."/>
        </authorList>
    </citation>
    <scope>NUCLEOTIDE SEQUENCE [GENOMIC DNA]</scope>
</reference>
<reference key="2">
    <citation type="journal article" date="2006" name="PLoS Biol.">
        <title>Macronuclear genome sequence of the ciliate Tetrahymena thermophila, a model eukaryote.</title>
        <authorList>
            <person name="Eisen J.A."/>
            <person name="Coyne R.S."/>
            <person name="Wu M."/>
            <person name="Wu D."/>
            <person name="Thiagarajan M."/>
            <person name="Wortman J.R."/>
            <person name="Badger J.H."/>
            <person name="Ren Q."/>
            <person name="Amedeo P."/>
            <person name="Jones K.M."/>
            <person name="Tallon L.J."/>
            <person name="Delcher A.L."/>
            <person name="Salzberg S.L."/>
            <person name="Silva J.C."/>
            <person name="Haas B.J."/>
            <person name="Majoros W.H."/>
            <person name="Farzad M."/>
            <person name="Carlton J.M."/>
            <person name="Smith R.K. Jr."/>
            <person name="Garg J."/>
            <person name="Pearlman R.E."/>
            <person name="Karrer K.M."/>
            <person name="Sun L."/>
            <person name="Manning G."/>
            <person name="Elde N.C."/>
            <person name="Turkewitz A.P."/>
            <person name="Asai D.J."/>
            <person name="Wilkes D.E."/>
            <person name="Wang Y."/>
            <person name="Cai H."/>
            <person name="Collins K."/>
            <person name="Stewart B.A."/>
            <person name="Lee S.R."/>
            <person name="Wilamowska K."/>
            <person name="Weinberg Z."/>
            <person name="Ruzzo W.L."/>
            <person name="Wloga D."/>
            <person name="Gaertig J."/>
            <person name="Frankel J."/>
            <person name="Tsao C.-C."/>
            <person name="Gorovsky M.A."/>
            <person name="Keeling P.J."/>
            <person name="Waller R.F."/>
            <person name="Patron N.J."/>
            <person name="Cherry J.M."/>
            <person name="Stover N.A."/>
            <person name="Krieger C.J."/>
            <person name="del Toro C."/>
            <person name="Ryder H.F."/>
            <person name="Williamson S.C."/>
            <person name="Barbeau R.A."/>
            <person name="Hamilton E.P."/>
            <person name="Orias E."/>
        </authorList>
    </citation>
    <scope>NUCLEOTIDE SEQUENCE [LARGE SCALE GENOMIC DNA]</scope>
    <source>
        <strain>SB210</strain>
    </source>
</reference>
<reference key="3">
    <citation type="journal article" date="1982" name="J. Biol. Chem.">
        <title>Regulation of histone acetylation in Tetrahymena macro- and micronuclei.</title>
        <authorList>
            <person name="Vavra K.J."/>
            <person name="Allis C.D."/>
            <person name="Gorovsky M.A."/>
        </authorList>
    </citation>
    <scope>ACETYLATION</scope>
    <source>
        <strain>B</strain>
    </source>
</reference>
<reference key="4">
    <citation type="journal article" date="1989" name="Biochemistry">
        <title>Ubiquitinated histone H2B is preferentially located in transcriptionally active chromatin.</title>
        <authorList>
            <person name="Nickel B.E."/>
            <person name="Allis C.D."/>
            <person name="Davie J.R."/>
        </authorList>
    </citation>
    <scope>UBIQUITINATION</scope>
</reference>
<reference key="5">
    <citation type="journal article" date="1991" name="Biochem. Cell Biol.">
        <title>Timing of the appearance of ubiquitinated histones in developing new macronuclei of Tetrahymena thermophila.</title>
        <authorList>
            <person name="Davie J.R."/>
            <person name="Lin R."/>
            <person name="Allis C.D."/>
        </authorList>
    </citation>
    <scope>UBIQUITINATION</scope>
</reference>
<reference key="6">
    <citation type="journal article" date="2004" name="Mol. Cell. Proteomics">
        <title>Characterization of Tetrahymena histone H2B variants and posttranslational populations by electron capture dissociation (ECD) Fourier transform ion cyclotron mass spectrometry (FT-ICR MS).</title>
        <authorList>
            <person name="Medzihradszky K.F."/>
            <person name="Zhang X."/>
            <person name="Chalkley R.J."/>
            <person name="Guan S."/>
            <person name="McFarland M.A."/>
            <person name="Chalmers M.J."/>
            <person name="Marshall A.G."/>
            <person name="Diaz R.L."/>
            <person name="Allis C.D."/>
            <person name="Burlingame A.L."/>
        </authorList>
    </citation>
    <scope>METHYLATION AT ALA-2</scope>
    <scope>ACETYLATION AT LYS-5 AND LYS-42</scope>
    <scope>IDENTIFICATION BY MASS SPECTROMETRY</scope>
    <source>
        <strain>CU427</strain>
        <strain>CU428</strain>
    </source>
</reference>
<evidence type="ECO:0000250" key="1"/>
<evidence type="ECO:0000256" key="2">
    <source>
        <dbReference type="SAM" id="MobiDB-lite"/>
    </source>
</evidence>
<evidence type="ECO:0000269" key="3">
    <source>
    </source>
</evidence>
<evidence type="ECO:0000269" key="4">
    <source>
    </source>
</evidence>
<evidence type="ECO:0000305" key="5"/>
<organism>
    <name type="scientific">Tetrahymena thermophila (strain SB210)</name>
    <dbReference type="NCBI Taxonomy" id="312017"/>
    <lineage>
        <taxon>Eukaryota</taxon>
        <taxon>Sar</taxon>
        <taxon>Alveolata</taxon>
        <taxon>Ciliophora</taxon>
        <taxon>Intramacronucleata</taxon>
        <taxon>Oligohymenophorea</taxon>
        <taxon>Hymenostomatida</taxon>
        <taxon>Tetrahymenina</taxon>
        <taxon>Tetrahymenidae</taxon>
        <taxon>Tetrahymena</taxon>
    </lineage>
</organism>